<reference key="1">
    <citation type="submission" date="2005-03" db="EMBL/GenBank/DDBJ databases">
        <title>Complete structure of the chloroplast genome of Populus alba.</title>
        <authorList>
            <person name="Okumura S."/>
            <person name="Yamashita A."/>
            <person name="Kanamoto H."/>
            <person name="Hattori M."/>
            <person name="Takase H."/>
            <person name="Tomizawa K."/>
        </authorList>
    </citation>
    <scope>NUCLEOTIDE SEQUENCE [LARGE SCALE GENOMIC DNA]</scope>
</reference>
<comment type="function">
    <text evidence="1">DNA-dependent RNA polymerase catalyzes the transcription of DNA into RNA using the four ribonucleoside triphosphates as substrates.</text>
</comment>
<comment type="catalytic activity">
    <reaction evidence="1">
        <text>RNA(n) + a ribonucleoside 5'-triphosphate = RNA(n+1) + diphosphate</text>
        <dbReference type="Rhea" id="RHEA:21248"/>
        <dbReference type="Rhea" id="RHEA-COMP:14527"/>
        <dbReference type="Rhea" id="RHEA-COMP:17342"/>
        <dbReference type="ChEBI" id="CHEBI:33019"/>
        <dbReference type="ChEBI" id="CHEBI:61557"/>
        <dbReference type="ChEBI" id="CHEBI:140395"/>
        <dbReference type="EC" id="2.7.7.6"/>
    </reaction>
</comment>
<comment type="subunit">
    <text evidence="1">In plastids the minimal PEP RNA polymerase catalytic core is composed of four subunits: alpha, beta, beta', and beta''. When a (nuclear-encoded) sigma factor is associated with the core the holoenzyme is formed, which can initiate transcription.</text>
</comment>
<comment type="subcellular location">
    <subcellularLocation>
        <location>Plastid</location>
        <location>Chloroplast</location>
    </subcellularLocation>
</comment>
<comment type="domain">
    <text evidence="1">The N-terminal domain is essential for RNAP assembly and basal transcription, whereas the C-terminal domain is involved in interaction with transcriptional regulators and with upstream promoter elements.</text>
</comment>
<comment type="similarity">
    <text evidence="1">Belongs to the RNA polymerase alpha chain family.</text>
</comment>
<proteinExistence type="inferred from homology"/>
<accession>Q14FC5</accession>
<organism>
    <name type="scientific">Populus alba</name>
    <name type="common">White poplar</name>
    <dbReference type="NCBI Taxonomy" id="43335"/>
    <lineage>
        <taxon>Eukaryota</taxon>
        <taxon>Viridiplantae</taxon>
        <taxon>Streptophyta</taxon>
        <taxon>Embryophyta</taxon>
        <taxon>Tracheophyta</taxon>
        <taxon>Spermatophyta</taxon>
        <taxon>Magnoliopsida</taxon>
        <taxon>eudicotyledons</taxon>
        <taxon>Gunneridae</taxon>
        <taxon>Pentapetalae</taxon>
        <taxon>rosids</taxon>
        <taxon>fabids</taxon>
        <taxon>Malpighiales</taxon>
        <taxon>Salicaceae</taxon>
        <taxon>Saliceae</taxon>
        <taxon>Populus</taxon>
    </lineage>
</organism>
<keyword id="KW-0150">Chloroplast</keyword>
<keyword id="KW-0240">DNA-directed RNA polymerase</keyword>
<keyword id="KW-0548">Nucleotidyltransferase</keyword>
<keyword id="KW-0934">Plastid</keyword>
<keyword id="KW-0804">Transcription</keyword>
<keyword id="KW-0808">Transferase</keyword>
<feature type="chain" id="PRO_0000275694" description="DNA-directed RNA polymerase subunit alpha">
    <location>
        <begin position="1"/>
        <end position="339"/>
    </location>
</feature>
<feature type="region of interest" description="Alpha N-terminal domain (alpha-NTD)" evidence="1">
    <location>
        <begin position="1"/>
        <end position="233"/>
    </location>
</feature>
<feature type="region of interest" description="Alpha C-terminal domain (alpha-CTD)" evidence="1">
    <location>
        <begin position="267"/>
        <end position="339"/>
    </location>
</feature>
<dbReference type="EC" id="2.7.7.6" evidence="1"/>
<dbReference type="EMBL" id="AP008956">
    <property type="protein sequence ID" value="BAE97237.1"/>
    <property type="molecule type" value="Genomic_DNA"/>
</dbReference>
<dbReference type="RefSeq" id="YP_665590.1">
    <property type="nucleotide sequence ID" value="NC_008235.1"/>
</dbReference>
<dbReference type="SMR" id="Q14FC5"/>
<dbReference type="GeneID" id="4178253"/>
<dbReference type="KEGG" id="palz:4178253"/>
<dbReference type="OrthoDB" id="4362at3646"/>
<dbReference type="GO" id="GO:0009507">
    <property type="term" value="C:chloroplast"/>
    <property type="evidence" value="ECO:0007669"/>
    <property type="project" value="UniProtKB-SubCell"/>
</dbReference>
<dbReference type="GO" id="GO:0000428">
    <property type="term" value="C:DNA-directed RNA polymerase complex"/>
    <property type="evidence" value="ECO:0007669"/>
    <property type="project" value="UniProtKB-KW"/>
</dbReference>
<dbReference type="GO" id="GO:0005739">
    <property type="term" value="C:mitochondrion"/>
    <property type="evidence" value="ECO:0007669"/>
    <property type="project" value="GOC"/>
</dbReference>
<dbReference type="GO" id="GO:0003677">
    <property type="term" value="F:DNA binding"/>
    <property type="evidence" value="ECO:0007669"/>
    <property type="project" value="UniProtKB-UniRule"/>
</dbReference>
<dbReference type="GO" id="GO:0003899">
    <property type="term" value="F:DNA-directed RNA polymerase activity"/>
    <property type="evidence" value="ECO:0007669"/>
    <property type="project" value="UniProtKB-UniRule"/>
</dbReference>
<dbReference type="GO" id="GO:0046983">
    <property type="term" value="F:protein dimerization activity"/>
    <property type="evidence" value="ECO:0007669"/>
    <property type="project" value="InterPro"/>
</dbReference>
<dbReference type="GO" id="GO:0006351">
    <property type="term" value="P:DNA-templated transcription"/>
    <property type="evidence" value="ECO:0007669"/>
    <property type="project" value="UniProtKB-UniRule"/>
</dbReference>
<dbReference type="CDD" id="cd06928">
    <property type="entry name" value="RNAP_alpha_NTD"/>
    <property type="match status" value="1"/>
</dbReference>
<dbReference type="FunFam" id="2.170.120.12:FF:000001">
    <property type="entry name" value="DNA-directed RNA polymerase subunit alpha"/>
    <property type="match status" value="1"/>
</dbReference>
<dbReference type="FunFam" id="3.30.1360.10:FF:000039">
    <property type="entry name" value="DNA-directed RNA polymerase subunit alpha"/>
    <property type="match status" value="1"/>
</dbReference>
<dbReference type="Gene3D" id="1.10.150.20">
    <property type="entry name" value="5' to 3' exonuclease, C-terminal subdomain"/>
    <property type="match status" value="1"/>
</dbReference>
<dbReference type="Gene3D" id="2.170.120.12">
    <property type="entry name" value="DNA-directed RNA polymerase, insert domain"/>
    <property type="match status" value="1"/>
</dbReference>
<dbReference type="Gene3D" id="3.30.1360.10">
    <property type="entry name" value="RNA polymerase, RBP11-like subunit"/>
    <property type="match status" value="1"/>
</dbReference>
<dbReference type="HAMAP" id="MF_00059">
    <property type="entry name" value="RNApol_bact_RpoA"/>
    <property type="match status" value="1"/>
</dbReference>
<dbReference type="InterPro" id="IPR011262">
    <property type="entry name" value="DNA-dir_RNA_pol_insert"/>
</dbReference>
<dbReference type="InterPro" id="IPR011263">
    <property type="entry name" value="DNA-dir_RNA_pol_RpoA/D/Rpb3"/>
</dbReference>
<dbReference type="InterPro" id="IPR011773">
    <property type="entry name" value="DNA-dir_RpoA"/>
</dbReference>
<dbReference type="InterPro" id="IPR036603">
    <property type="entry name" value="RBP11-like"/>
</dbReference>
<dbReference type="InterPro" id="IPR011260">
    <property type="entry name" value="RNAP_asu_C"/>
</dbReference>
<dbReference type="InterPro" id="IPR036643">
    <property type="entry name" value="RNApol_insert_sf"/>
</dbReference>
<dbReference type="NCBIfam" id="TIGR02027">
    <property type="entry name" value="rpoA"/>
    <property type="match status" value="1"/>
</dbReference>
<dbReference type="Pfam" id="PF01000">
    <property type="entry name" value="RNA_pol_A_bac"/>
    <property type="match status" value="1"/>
</dbReference>
<dbReference type="Pfam" id="PF03118">
    <property type="entry name" value="RNA_pol_A_CTD"/>
    <property type="match status" value="1"/>
</dbReference>
<dbReference type="Pfam" id="PF01193">
    <property type="entry name" value="RNA_pol_L"/>
    <property type="match status" value="1"/>
</dbReference>
<dbReference type="SMART" id="SM00662">
    <property type="entry name" value="RPOLD"/>
    <property type="match status" value="1"/>
</dbReference>
<dbReference type="SUPFAM" id="SSF47789">
    <property type="entry name" value="C-terminal domain of RNA polymerase alpha subunit"/>
    <property type="match status" value="1"/>
</dbReference>
<dbReference type="SUPFAM" id="SSF56553">
    <property type="entry name" value="Insert subdomain of RNA polymerase alpha subunit"/>
    <property type="match status" value="1"/>
</dbReference>
<dbReference type="SUPFAM" id="SSF55257">
    <property type="entry name" value="RBP11-like subunits of RNA polymerase"/>
    <property type="match status" value="1"/>
</dbReference>
<sequence length="339" mass="39064">MVREKVRISTRTLQWKCVESRADSKRLYYGRFILSPLMKGQADTIGIAMRRALLGEIEGTCITRAKSKKIPHEFSTITGIQESIHEILMNLKEIVLRSNLYGTHNASICVKGPGCVTAQDIILPPSVEIIDNTQHIASLREPIDLHIGLEIERNRGYCMKPPKNFQDGSYSIDAVFMPVRNANHSVHSYGNGNEKQEILFLEIWTNGSLTPKEALHEASRNLIDLFIPFLHAEEESFHLEKNQHKITLPLFAFHDRLAKLRKNQKEIALKSIFIDQLELAPKIYNCLKRSNIHTLWDLLKNSQEDLMKIEHFRIEDVKHIFGILKIEKHFTINLPKNKF</sequence>
<name>RPOA_POPAL</name>
<gene>
    <name evidence="1" type="primary">rpoA</name>
</gene>
<geneLocation type="chloroplast"/>
<protein>
    <recommendedName>
        <fullName evidence="1">DNA-directed RNA polymerase subunit alpha</fullName>
        <shortName evidence="1">PEP</shortName>
        <ecNumber evidence="1">2.7.7.6</ecNumber>
    </recommendedName>
    <alternativeName>
        <fullName evidence="1">Plastid-encoded RNA polymerase subunit alpha</fullName>
        <shortName evidence="1">RNA polymerase subunit alpha</shortName>
    </alternativeName>
</protein>
<evidence type="ECO:0000255" key="1">
    <source>
        <dbReference type="HAMAP-Rule" id="MF_00059"/>
    </source>
</evidence>